<name>K1C27_RAT</name>
<evidence type="ECO:0000250" key="1">
    <source>
        <dbReference type="UniProtKB" id="Q7Z3Y8"/>
    </source>
</evidence>
<evidence type="ECO:0000250" key="2">
    <source>
        <dbReference type="UniProtKB" id="Q9Z320"/>
    </source>
</evidence>
<evidence type="ECO:0000255" key="3"/>
<evidence type="ECO:0000255" key="4">
    <source>
        <dbReference type="PROSITE-ProRule" id="PRU01188"/>
    </source>
</evidence>
<evidence type="ECO:0000256" key="5">
    <source>
        <dbReference type="SAM" id="MobiDB-lite"/>
    </source>
</evidence>
<evidence type="ECO:0000269" key="6">
    <source>
    </source>
</evidence>
<evidence type="ECO:0000305" key="7"/>
<evidence type="ECO:0000312" key="8">
    <source>
        <dbReference type="EMBL" id="DAA04464.1"/>
    </source>
</evidence>
<gene>
    <name evidence="1" type="primary">Krt27</name>
    <name evidence="8" type="synonym">Ka40</name>
</gene>
<feature type="chain" id="PRO_0000312703" description="Keratin, type I cytoskeletal 27">
    <location>
        <begin position="1"/>
        <end position="449"/>
    </location>
</feature>
<feature type="domain" description="IF rod" evidence="4">
    <location>
        <begin position="74"/>
        <end position="389"/>
    </location>
</feature>
<feature type="region of interest" description="Head" evidence="3">
    <location>
        <begin position="1"/>
        <end position="73"/>
    </location>
</feature>
<feature type="region of interest" description="Coil 1A" evidence="3">
    <location>
        <begin position="74"/>
        <end position="109"/>
    </location>
</feature>
<feature type="region of interest" description="Linker 1" evidence="3">
    <location>
        <begin position="110"/>
        <end position="131"/>
    </location>
</feature>
<feature type="region of interest" description="Coil 1B" evidence="3">
    <location>
        <begin position="132"/>
        <end position="223"/>
    </location>
</feature>
<feature type="region of interest" description="Linker 12" evidence="3">
    <location>
        <begin position="224"/>
        <end position="246"/>
    </location>
</feature>
<feature type="region of interest" description="Coil 2" evidence="3">
    <location>
        <begin position="247"/>
        <end position="385"/>
    </location>
</feature>
<feature type="region of interest" description="Tail" evidence="3">
    <location>
        <begin position="386"/>
        <end position="449"/>
    </location>
</feature>
<feature type="region of interest" description="Disordered" evidence="5">
    <location>
        <begin position="425"/>
        <end position="449"/>
    </location>
</feature>
<feature type="compositionally biased region" description="Basic and acidic residues" evidence="5">
    <location>
        <begin position="430"/>
        <end position="449"/>
    </location>
</feature>
<comment type="function">
    <text evidence="2">Essential for the proper assembly of type I and type II keratin protein complexes and formation of keratin intermediate filaments in the inner root sheath (irs).</text>
</comment>
<comment type="subunit">
    <text evidence="2 7">Heterotetramer of two type I and two type II keratins. Interacts with KRT6A to form filaments (By similarity).</text>
</comment>
<comment type="subcellular location">
    <subcellularLocation>
        <location evidence="2">Cytoplasm</location>
    </subcellularLocation>
</comment>
<comment type="miscellaneous">
    <text evidence="7">There are two types of cytoskeletal and microfibrillar keratin: I (acidic; 40-55 kDa) and II (neutral to basic; 56-70 kDa).</text>
</comment>
<comment type="similarity">
    <text evidence="4">Belongs to the intermediate filament family.</text>
</comment>
<sequence length="449" mass="49109">MSVRFSSASRRLGSVRLSSPGAALGAGNTCGVPGIGSGFSCAFGGSSLAGGLGMGGASCGAFTVNEHGLLSGNEKVTMQNLNDRLASYLENVQALEEANADLEQKIKDWYEKFGPGSCRGLDHDYSRYFPIIDDLRTQIISATAQNANIVLQNDNARLTADDFRMKYENELALHQSVDADINGLRRVLDELTLCRTDLEVQLETLSEELAYLKKNHEEEMQALQCAAGGNVNVEMNAAPGVDLTVLLNNMRAEYEALAEQNRRDAEAWFQEKSASLQQQISDDAGATTSARNELTEMKRTLQTLEIELQSLLAMKHSLECSLTETEGNYCTQLAQIQAQISALEEQLHQVRTETEGQKLEYEQLLNVKAHLEKEIETYCLLIGGDEGSCVKSKGQGGPGNQTKDSPKTAIVKTVVEELDPRGKVLSSRVHTLEEKSTKVNNKNEQRIPS</sequence>
<keyword id="KW-0175">Coiled coil</keyword>
<keyword id="KW-0963">Cytoplasm</keyword>
<keyword id="KW-0403">Intermediate filament</keyword>
<keyword id="KW-0416">Keratin</keyword>
<keyword id="KW-1185">Reference proteome</keyword>
<reference evidence="7" key="1">
    <citation type="journal article" date="2004" name="Nature">
        <title>Genome sequence of the Brown Norway rat yields insights into mammalian evolution.</title>
        <authorList>
            <person name="Gibbs R.A."/>
            <person name="Weinstock G.M."/>
            <person name="Metzker M.L."/>
            <person name="Muzny D.M."/>
            <person name="Sodergren E.J."/>
            <person name="Scherer S."/>
            <person name="Scott G."/>
            <person name="Steffen D."/>
            <person name="Worley K.C."/>
            <person name="Burch P.E."/>
            <person name="Okwuonu G."/>
            <person name="Hines S."/>
            <person name="Lewis L."/>
            <person name="Deramo C."/>
            <person name="Delgado O."/>
            <person name="Dugan-Rocha S."/>
            <person name="Miner G."/>
            <person name="Morgan M."/>
            <person name="Hawes A."/>
            <person name="Gill R."/>
            <person name="Holt R.A."/>
            <person name="Adams M.D."/>
            <person name="Amanatides P.G."/>
            <person name="Baden-Tillson H."/>
            <person name="Barnstead M."/>
            <person name="Chin S."/>
            <person name="Evans C.A."/>
            <person name="Ferriera S."/>
            <person name="Fosler C."/>
            <person name="Glodek A."/>
            <person name="Gu Z."/>
            <person name="Jennings D."/>
            <person name="Kraft C.L."/>
            <person name="Nguyen T."/>
            <person name="Pfannkoch C.M."/>
            <person name="Sitter C."/>
            <person name="Sutton G.G."/>
            <person name="Venter J.C."/>
            <person name="Woodage T."/>
            <person name="Smith D."/>
            <person name="Lee H.-M."/>
            <person name="Gustafson E."/>
            <person name="Cahill P."/>
            <person name="Kana A."/>
            <person name="Doucette-Stamm L."/>
            <person name="Weinstock K."/>
            <person name="Fechtel K."/>
            <person name="Weiss R.B."/>
            <person name="Dunn D.M."/>
            <person name="Green E.D."/>
            <person name="Blakesley R.W."/>
            <person name="Bouffard G.G."/>
            <person name="De Jong P.J."/>
            <person name="Osoegawa K."/>
            <person name="Zhu B."/>
            <person name="Marra M."/>
            <person name="Schein J."/>
            <person name="Bosdet I."/>
            <person name="Fjell C."/>
            <person name="Jones S."/>
            <person name="Krzywinski M."/>
            <person name="Mathewson C."/>
            <person name="Siddiqui A."/>
            <person name="Wye N."/>
            <person name="McPherson J."/>
            <person name="Zhao S."/>
            <person name="Fraser C.M."/>
            <person name="Shetty J."/>
            <person name="Shatsman S."/>
            <person name="Geer K."/>
            <person name="Chen Y."/>
            <person name="Abramzon S."/>
            <person name="Nierman W.C."/>
            <person name="Havlak P.H."/>
            <person name="Chen R."/>
            <person name="Durbin K.J."/>
            <person name="Egan A."/>
            <person name="Ren Y."/>
            <person name="Song X.-Z."/>
            <person name="Li B."/>
            <person name="Liu Y."/>
            <person name="Qin X."/>
            <person name="Cawley S."/>
            <person name="Cooney A.J."/>
            <person name="D'Souza L.M."/>
            <person name="Martin K."/>
            <person name="Wu J.Q."/>
            <person name="Gonzalez-Garay M.L."/>
            <person name="Jackson A.R."/>
            <person name="Kalafus K.J."/>
            <person name="McLeod M.P."/>
            <person name="Milosavljevic A."/>
            <person name="Virk D."/>
            <person name="Volkov A."/>
            <person name="Wheeler D.A."/>
            <person name="Zhang Z."/>
            <person name="Bailey J.A."/>
            <person name="Eichler E.E."/>
            <person name="Tuzun E."/>
            <person name="Birney E."/>
            <person name="Mongin E."/>
            <person name="Ureta-Vidal A."/>
            <person name="Woodwark C."/>
            <person name="Zdobnov E."/>
            <person name="Bork P."/>
            <person name="Suyama M."/>
            <person name="Torrents D."/>
            <person name="Alexandersson M."/>
            <person name="Trask B.J."/>
            <person name="Young J.M."/>
            <person name="Huang H."/>
            <person name="Wang H."/>
            <person name="Xing H."/>
            <person name="Daniels S."/>
            <person name="Gietzen D."/>
            <person name="Schmidt J."/>
            <person name="Stevens K."/>
            <person name="Vitt U."/>
            <person name="Wingrove J."/>
            <person name="Camara F."/>
            <person name="Mar Alba M."/>
            <person name="Abril J.F."/>
            <person name="Guigo R."/>
            <person name="Smit A."/>
            <person name="Dubchak I."/>
            <person name="Rubin E.M."/>
            <person name="Couronne O."/>
            <person name="Poliakov A."/>
            <person name="Huebner N."/>
            <person name="Ganten D."/>
            <person name="Goesele C."/>
            <person name="Hummel O."/>
            <person name="Kreitler T."/>
            <person name="Lee Y.-A."/>
            <person name="Monti J."/>
            <person name="Schulz H."/>
            <person name="Zimdahl H."/>
            <person name="Himmelbauer H."/>
            <person name="Lehrach H."/>
            <person name="Jacob H.J."/>
            <person name="Bromberg S."/>
            <person name="Gullings-Handley J."/>
            <person name="Jensen-Seaman M.I."/>
            <person name="Kwitek A.E."/>
            <person name="Lazar J."/>
            <person name="Pasko D."/>
            <person name="Tonellato P.J."/>
            <person name="Twigger S."/>
            <person name="Ponting C.P."/>
            <person name="Duarte J.M."/>
            <person name="Rice S."/>
            <person name="Goodstadt L."/>
            <person name="Beatson S.A."/>
            <person name="Emes R.D."/>
            <person name="Winter E.E."/>
            <person name="Webber C."/>
            <person name="Brandt P."/>
            <person name="Nyakatura G."/>
            <person name="Adetobi M."/>
            <person name="Chiaromonte F."/>
            <person name="Elnitski L."/>
            <person name="Eswara P."/>
            <person name="Hardison R.C."/>
            <person name="Hou M."/>
            <person name="Kolbe D."/>
            <person name="Makova K."/>
            <person name="Miller W."/>
            <person name="Nekrutenko A."/>
            <person name="Riemer C."/>
            <person name="Schwartz S."/>
            <person name="Taylor J."/>
            <person name="Yang S."/>
            <person name="Zhang Y."/>
            <person name="Lindpaintner K."/>
            <person name="Andrews T.D."/>
            <person name="Caccamo M."/>
            <person name="Clamp M."/>
            <person name="Clarke L."/>
            <person name="Curwen V."/>
            <person name="Durbin R.M."/>
            <person name="Eyras E."/>
            <person name="Searle S.M."/>
            <person name="Cooper G.M."/>
            <person name="Batzoglou S."/>
            <person name="Brudno M."/>
            <person name="Sidow A."/>
            <person name="Stone E.A."/>
            <person name="Payseur B.A."/>
            <person name="Bourque G."/>
            <person name="Lopez-Otin C."/>
            <person name="Puente X.S."/>
            <person name="Chakrabarti K."/>
            <person name="Chatterji S."/>
            <person name="Dewey C."/>
            <person name="Pachter L."/>
            <person name="Bray N."/>
            <person name="Yap V.B."/>
            <person name="Caspi A."/>
            <person name="Tesler G."/>
            <person name="Pevzner P.A."/>
            <person name="Haussler D."/>
            <person name="Roskin K.M."/>
            <person name="Baertsch R."/>
            <person name="Clawson H."/>
            <person name="Furey T.S."/>
            <person name="Hinrichs A.S."/>
            <person name="Karolchik D."/>
            <person name="Kent W.J."/>
            <person name="Rosenbloom K.R."/>
            <person name="Trumbower H."/>
            <person name="Weirauch M."/>
            <person name="Cooper D.N."/>
            <person name="Stenson P.D."/>
            <person name="Ma B."/>
            <person name="Brent M."/>
            <person name="Arumugam M."/>
            <person name="Shteynberg D."/>
            <person name="Copley R.R."/>
            <person name="Taylor M.S."/>
            <person name="Riethman H."/>
            <person name="Mudunuri U."/>
            <person name="Peterson J."/>
            <person name="Guyer M."/>
            <person name="Felsenfeld A."/>
            <person name="Old S."/>
            <person name="Mockrin S."/>
            <person name="Collins F.S."/>
        </authorList>
    </citation>
    <scope>NUCLEOTIDE SEQUENCE [LARGE SCALE GENOMIC DNA]</scope>
    <source>
        <strain evidence="6">Brown Norway</strain>
    </source>
</reference>
<reference evidence="7 8" key="2">
    <citation type="journal article" date="2004" name="Eur. J. Cell Biol.">
        <title>Comprehensive analysis of keratin gene clusters in humans and rodents.</title>
        <authorList>
            <person name="Hesse M."/>
            <person name="Zimek A."/>
            <person name="Weber K."/>
            <person name="Magin T.M."/>
        </authorList>
    </citation>
    <scope>IDENTIFICATION</scope>
</reference>
<accession>Q6IFW8</accession>
<organism>
    <name type="scientific">Rattus norvegicus</name>
    <name type="common">Rat</name>
    <dbReference type="NCBI Taxonomy" id="10116"/>
    <lineage>
        <taxon>Eukaryota</taxon>
        <taxon>Metazoa</taxon>
        <taxon>Chordata</taxon>
        <taxon>Craniata</taxon>
        <taxon>Vertebrata</taxon>
        <taxon>Euteleostomi</taxon>
        <taxon>Mammalia</taxon>
        <taxon>Eutheria</taxon>
        <taxon>Euarchontoglires</taxon>
        <taxon>Glires</taxon>
        <taxon>Rodentia</taxon>
        <taxon>Myomorpha</taxon>
        <taxon>Muroidea</taxon>
        <taxon>Muridae</taxon>
        <taxon>Murinae</taxon>
        <taxon>Rattus</taxon>
    </lineage>
</organism>
<protein>
    <recommendedName>
        <fullName>Keratin, type I cytoskeletal 27</fullName>
    </recommendedName>
    <alternativeName>
        <fullName>Cytokeratin-27</fullName>
        <shortName>CK-27</shortName>
    </alternativeName>
    <alternativeName>
        <fullName>Keratin-27</fullName>
        <shortName>K27</shortName>
    </alternativeName>
    <alternativeName>
        <fullName>Type I inner root sheath-specific keratin-K25irs3</fullName>
    </alternativeName>
    <alternativeName>
        <fullName>Type I keratin KA40</fullName>
    </alternativeName>
</protein>
<proteinExistence type="inferred from homology"/>
<dbReference type="EMBL" id="AABR03073900">
    <property type="status" value="NOT_ANNOTATED_CDS"/>
    <property type="molecule type" value="Genomic_DNA"/>
</dbReference>
<dbReference type="EMBL" id="BK004030">
    <property type="protein sequence ID" value="DAA04464.1"/>
    <property type="molecule type" value="mRNA"/>
</dbReference>
<dbReference type="RefSeq" id="NP_001008824.1">
    <property type="nucleotide sequence ID" value="NM_001008824.1"/>
</dbReference>
<dbReference type="SMR" id="Q6IFW8"/>
<dbReference type="FunCoup" id="Q6IFW8">
    <property type="interactions" value="160"/>
</dbReference>
<dbReference type="STRING" id="10116.ENSRNOP00000015740"/>
<dbReference type="iPTMnet" id="Q6IFW8"/>
<dbReference type="PhosphoSitePlus" id="Q6IFW8"/>
<dbReference type="PaxDb" id="10116-ENSRNOP00000015740"/>
<dbReference type="Ensembl" id="ENSRNOT00000015740.6">
    <property type="protein sequence ID" value="ENSRNOP00000015740.4"/>
    <property type="gene ID" value="ENSRNOG00000011628.6"/>
</dbReference>
<dbReference type="GeneID" id="450229"/>
<dbReference type="KEGG" id="rno:450229"/>
<dbReference type="UCSC" id="RGD:1359115">
    <property type="organism name" value="rat"/>
</dbReference>
<dbReference type="AGR" id="RGD:1359115"/>
<dbReference type="CTD" id="342574"/>
<dbReference type="RGD" id="1359115">
    <property type="gene designation" value="Krt27"/>
</dbReference>
<dbReference type="eggNOG" id="ENOG502SIHJ">
    <property type="taxonomic scope" value="Eukaryota"/>
</dbReference>
<dbReference type="GeneTree" id="ENSGT00940000161982"/>
<dbReference type="HOGENOM" id="CLU_012560_8_3_1"/>
<dbReference type="InParanoid" id="Q6IFW8"/>
<dbReference type="OMA" id="SRVHTME"/>
<dbReference type="OrthoDB" id="2441647at2759"/>
<dbReference type="PhylomeDB" id="Q6IFW8"/>
<dbReference type="TreeFam" id="TF332742"/>
<dbReference type="Reactome" id="R-RNO-6805567">
    <property type="pathway name" value="Keratinization"/>
</dbReference>
<dbReference type="Reactome" id="R-RNO-6809371">
    <property type="pathway name" value="Formation of the cornified envelope"/>
</dbReference>
<dbReference type="PRO" id="PR:Q6IFW8"/>
<dbReference type="Proteomes" id="UP000002494">
    <property type="component" value="Chromosome 10"/>
</dbReference>
<dbReference type="Bgee" id="ENSRNOG00000011628">
    <property type="expression patterns" value="Expressed in ovary and 1 other cell type or tissue"/>
</dbReference>
<dbReference type="GO" id="GO:0005737">
    <property type="term" value="C:cytoplasm"/>
    <property type="evidence" value="ECO:0007669"/>
    <property type="project" value="UniProtKB-SubCell"/>
</dbReference>
<dbReference type="GO" id="GO:0005856">
    <property type="term" value="C:cytoskeleton"/>
    <property type="evidence" value="ECO:0000318"/>
    <property type="project" value="GO_Central"/>
</dbReference>
<dbReference type="GO" id="GO:0005882">
    <property type="term" value="C:intermediate filament"/>
    <property type="evidence" value="ECO:0007669"/>
    <property type="project" value="UniProtKB-KW"/>
</dbReference>
<dbReference type="GO" id="GO:0005198">
    <property type="term" value="F:structural molecule activity"/>
    <property type="evidence" value="ECO:0007669"/>
    <property type="project" value="InterPro"/>
</dbReference>
<dbReference type="GO" id="GO:0030855">
    <property type="term" value="P:epithelial cell differentiation"/>
    <property type="evidence" value="ECO:0000318"/>
    <property type="project" value="GO_Central"/>
</dbReference>
<dbReference type="GO" id="GO:0031069">
    <property type="term" value="P:hair follicle morphogenesis"/>
    <property type="evidence" value="ECO:0000266"/>
    <property type="project" value="RGD"/>
</dbReference>
<dbReference type="GO" id="GO:0045109">
    <property type="term" value="P:intermediate filament organization"/>
    <property type="evidence" value="ECO:0000318"/>
    <property type="project" value="GO_Central"/>
</dbReference>
<dbReference type="FunFam" id="1.20.5.1160:FF:000002">
    <property type="entry name" value="Type I keratin 10"/>
    <property type="match status" value="1"/>
</dbReference>
<dbReference type="FunFam" id="1.20.5.170:FF:000002">
    <property type="entry name" value="Type I keratin KA11"/>
    <property type="match status" value="1"/>
</dbReference>
<dbReference type="FunFam" id="1.20.5.500:FF:000001">
    <property type="entry name" value="Type II keratin 23"/>
    <property type="match status" value="1"/>
</dbReference>
<dbReference type="Gene3D" id="1.20.5.170">
    <property type="match status" value="1"/>
</dbReference>
<dbReference type="Gene3D" id="1.20.5.500">
    <property type="entry name" value="Single helix bin"/>
    <property type="match status" value="1"/>
</dbReference>
<dbReference type="Gene3D" id="1.20.5.1160">
    <property type="entry name" value="Vasodilator-stimulated phosphoprotein"/>
    <property type="match status" value="1"/>
</dbReference>
<dbReference type="InterPro" id="IPR039008">
    <property type="entry name" value="IF_rod_dom"/>
</dbReference>
<dbReference type="InterPro" id="IPR002957">
    <property type="entry name" value="Keratin_I"/>
</dbReference>
<dbReference type="PANTHER" id="PTHR23239">
    <property type="entry name" value="INTERMEDIATE FILAMENT"/>
    <property type="match status" value="1"/>
</dbReference>
<dbReference type="PANTHER" id="PTHR23239:SF120">
    <property type="entry name" value="KERATIN, TYPE I CYTOSKELETAL 27"/>
    <property type="match status" value="1"/>
</dbReference>
<dbReference type="Pfam" id="PF00038">
    <property type="entry name" value="Filament"/>
    <property type="match status" value="1"/>
</dbReference>
<dbReference type="PRINTS" id="PR01248">
    <property type="entry name" value="TYPE1KERATIN"/>
</dbReference>
<dbReference type="SMART" id="SM01391">
    <property type="entry name" value="Filament"/>
    <property type="match status" value="1"/>
</dbReference>
<dbReference type="SUPFAM" id="SSF64593">
    <property type="entry name" value="Intermediate filament protein, coiled coil region"/>
    <property type="match status" value="2"/>
</dbReference>
<dbReference type="PROSITE" id="PS51842">
    <property type="entry name" value="IF_ROD_2"/>
    <property type="match status" value="1"/>
</dbReference>